<proteinExistence type="inferred from homology"/>
<evidence type="ECO:0000250" key="1"/>
<evidence type="ECO:0000255" key="2"/>
<evidence type="ECO:0000255" key="3">
    <source>
        <dbReference type="PROSITE-ProRule" id="PRU00043"/>
    </source>
</evidence>
<evidence type="ECO:0000256" key="4">
    <source>
        <dbReference type="SAM" id="MobiDB-lite"/>
    </source>
</evidence>
<accession>Q5DRA9</accession>
<feature type="signal peptide" evidence="2">
    <location>
        <begin position="1"/>
        <end position="30"/>
    </location>
</feature>
<feature type="chain" id="PRO_0000003975" description="Protocadherin gamma-B2">
    <location>
        <begin position="31"/>
        <end position="931"/>
    </location>
</feature>
<feature type="topological domain" description="Extracellular" evidence="2">
    <location>
        <begin position="31"/>
        <end position="691"/>
    </location>
</feature>
<feature type="transmembrane region" description="Helical" evidence="2">
    <location>
        <begin position="692"/>
        <end position="712"/>
    </location>
</feature>
<feature type="topological domain" description="Cytoplasmic" evidence="2">
    <location>
        <begin position="713"/>
        <end position="931"/>
    </location>
</feature>
<feature type="domain" description="Cadherin 1" evidence="3">
    <location>
        <begin position="31"/>
        <end position="133"/>
    </location>
</feature>
<feature type="domain" description="Cadherin 2" evidence="3">
    <location>
        <begin position="134"/>
        <end position="242"/>
    </location>
</feature>
<feature type="domain" description="Cadherin 3" evidence="3">
    <location>
        <begin position="243"/>
        <end position="347"/>
    </location>
</feature>
<feature type="domain" description="Cadherin 4" evidence="3">
    <location>
        <begin position="348"/>
        <end position="452"/>
    </location>
</feature>
<feature type="domain" description="Cadherin 5" evidence="3">
    <location>
        <begin position="453"/>
        <end position="562"/>
    </location>
</feature>
<feature type="domain" description="Cadherin 6" evidence="3">
    <location>
        <begin position="570"/>
        <end position="675"/>
    </location>
</feature>
<feature type="region of interest" description="Disordered" evidence="4">
    <location>
        <begin position="814"/>
        <end position="840"/>
    </location>
</feature>
<feature type="region of interest" description="Disordered" evidence="4">
    <location>
        <begin position="901"/>
        <end position="931"/>
    </location>
</feature>
<feature type="compositionally biased region" description="Polar residues" evidence="4">
    <location>
        <begin position="815"/>
        <end position="840"/>
    </location>
</feature>
<feature type="compositionally biased region" description="Basic residues" evidence="4">
    <location>
        <begin position="921"/>
        <end position="931"/>
    </location>
</feature>
<feature type="glycosylation site" description="N-linked (GlcNAc...) asparagine" evidence="2">
    <location>
        <position position="419"/>
    </location>
</feature>
<feature type="glycosylation site" description="N-linked (GlcNAc...) asparagine" evidence="2">
    <location>
        <position position="545"/>
    </location>
</feature>
<sequence>MKASSGRCGLVRWLQVLLPFLLSLFPGALPVQIRYSIPEELAKNSVVGNLAKDLGLSVRDLPARKLRVSAEKEYFTVNPESGDLLVSDRIDREQICGKQPLCVLDFDTVAENPLNIFYIAVIVQDINDNTPLFKQTKINLKIGESTKPGTTFPLDPALDSDVGPNSLQRYHLNDNEYFDLAEKQTPDGRKYPELILQHSLDREEHSLHQLVLTAVDGGDPPQSGTTQIRVKVTDANDNPPVFSQDVYRVTLREDVPPGFFVLQVTATDRDEGVNAEITYSFHNVDEQVKHFFNLNEKTGEITTKDDLDFEIASSYTLSIEAKDPGDLAAHCSIQVEILDDNDCAPEVIVTSVFTPLPEDSPPGTVIALIKTRDRDSGENGEVYCQVLGNAKFILKSSSKNYYKLVTDGALDREEIPEYNLTITATDGGKPPLSSSIIVTLHISDVNDNAPVFQQTSYMVHVAENNPPGASIAQISASDPDLGPNGQVSYSIVASDLKPREILSYVSVSAQSGVVFAQRAFDHEQLRAFELTLQARDQGSPALSANVSLRVLVGDLNDNAPRVLYPALGSDGSALFDMVPRAAEPGYLVTKVVAVDADSGHNAWLSYHVLQASEPGLFSLGLRTGEVRTARALGDRDAARQRLLVAVRDGGQPPLSATATLHLIFADSLQEVLPDLSDRPEPSDPQAELQFYLVVALALISVLFFLAVILAISLRLRRSSRSDAWDCFQPGLSSKPGPGVLPSYSEGTLPYSYNLCVASQSAKTEFNFLNITPELIPAQDLLCDNASWEQNTNHGAAGVPFASDTILKQAPPNTDWRFSQAQRPGTSGSQNGDDTGTWPNNQFDTEMLQAMILASASEAADGSSTLGGGAGTMGLSARYGPQFTLQHVPDYRQNVYIPGSNATLTNAAGKRDGKAPAGGNGNKKKSGKKEKK</sequence>
<gene>
    <name type="primary">PCDHGB2</name>
</gene>
<keyword id="KW-0106">Calcium</keyword>
<keyword id="KW-0130">Cell adhesion</keyword>
<keyword id="KW-1003">Cell membrane</keyword>
<keyword id="KW-0325">Glycoprotein</keyword>
<keyword id="KW-0472">Membrane</keyword>
<keyword id="KW-1185">Reference proteome</keyword>
<keyword id="KW-0677">Repeat</keyword>
<keyword id="KW-0732">Signal</keyword>
<keyword id="KW-0812">Transmembrane</keyword>
<keyword id="KW-1133">Transmembrane helix</keyword>
<dbReference type="SMR" id="Q5DRA9"/>
<dbReference type="FunCoup" id="Q5DRA9">
    <property type="interactions" value="71"/>
</dbReference>
<dbReference type="GlyCosmos" id="Q5DRA9">
    <property type="glycosylation" value="2 sites, No reported glycans"/>
</dbReference>
<dbReference type="InParanoid" id="Q5DRA9"/>
<dbReference type="Proteomes" id="UP000002277">
    <property type="component" value="Unplaced"/>
</dbReference>
<dbReference type="GO" id="GO:0005886">
    <property type="term" value="C:plasma membrane"/>
    <property type="evidence" value="ECO:0000318"/>
    <property type="project" value="GO_Central"/>
</dbReference>
<dbReference type="GO" id="GO:0005509">
    <property type="term" value="F:calcium ion binding"/>
    <property type="evidence" value="ECO:0007669"/>
    <property type="project" value="InterPro"/>
</dbReference>
<dbReference type="GO" id="GO:0007155">
    <property type="term" value="P:cell adhesion"/>
    <property type="evidence" value="ECO:0000318"/>
    <property type="project" value="GO_Central"/>
</dbReference>
<dbReference type="GO" id="GO:0007156">
    <property type="term" value="P:homophilic cell adhesion via plasma membrane adhesion molecules"/>
    <property type="evidence" value="ECO:0007669"/>
    <property type="project" value="InterPro"/>
</dbReference>
<dbReference type="GO" id="GO:0007399">
    <property type="term" value="P:nervous system development"/>
    <property type="evidence" value="ECO:0007669"/>
    <property type="project" value="UniProtKB-ARBA"/>
</dbReference>
<dbReference type="CDD" id="cd11304">
    <property type="entry name" value="Cadherin_repeat"/>
    <property type="match status" value="6"/>
</dbReference>
<dbReference type="FunFam" id="2.60.40.60:FF:000004">
    <property type="entry name" value="Protocadherin 1 gamma 2"/>
    <property type="match status" value="1"/>
</dbReference>
<dbReference type="FunFam" id="2.60.40.60:FF:000001">
    <property type="entry name" value="Protocadherin alpha 2"/>
    <property type="match status" value="1"/>
</dbReference>
<dbReference type="FunFam" id="2.60.40.60:FF:000002">
    <property type="entry name" value="Protocadherin alpha 2"/>
    <property type="match status" value="1"/>
</dbReference>
<dbReference type="FunFam" id="2.60.40.60:FF:000006">
    <property type="entry name" value="Protocadherin alpha 2"/>
    <property type="match status" value="1"/>
</dbReference>
<dbReference type="FunFam" id="2.60.40.60:FF:000129">
    <property type="entry name" value="protocadherin alpha-C2 isoform X1"/>
    <property type="match status" value="1"/>
</dbReference>
<dbReference type="FunFam" id="2.60.40.60:FF:000018">
    <property type="entry name" value="Protocadherin gamma c3"/>
    <property type="match status" value="1"/>
</dbReference>
<dbReference type="Gene3D" id="2.60.40.60">
    <property type="entry name" value="Cadherins"/>
    <property type="match status" value="6"/>
</dbReference>
<dbReference type="InterPro" id="IPR002126">
    <property type="entry name" value="Cadherin-like_dom"/>
</dbReference>
<dbReference type="InterPro" id="IPR015919">
    <property type="entry name" value="Cadherin-like_sf"/>
</dbReference>
<dbReference type="InterPro" id="IPR032455">
    <property type="entry name" value="Cadherin_C"/>
</dbReference>
<dbReference type="InterPro" id="IPR031904">
    <property type="entry name" value="Cadherin_CBD"/>
</dbReference>
<dbReference type="InterPro" id="IPR020894">
    <property type="entry name" value="Cadherin_CS"/>
</dbReference>
<dbReference type="InterPro" id="IPR013164">
    <property type="entry name" value="Cadherin_N"/>
</dbReference>
<dbReference type="InterPro" id="IPR050174">
    <property type="entry name" value="Protocadherin/Cadherin-CA"/>
</dbReference>
<dbReference type="PANTHER" id="PTHR24028">
    <property type="entry name" value="CADHERIN-87A"/>
    <property type="match status" value="1"/>
</dbReference>
<dbReference type="PANTHER" id="PTHR24028:SF144">
    <property type="entry name" value="PROTOCADHERIN GAMMA-B2"/>
    <property type="match status" value="1"/>
</dbReference>
<dbReference type="Pfam" id="PF00028">
    <property type="entry name" value="Cadherin"/>
    <property type="match status" value="5"/>
</dbReference>
<dbReference type="Pfam" id="PF08266">
    <property type="entry name" value="Cadherin_2"/>
    <property type="match status" value="1"/>
</dbReference>
<dbReference type="Pfam" id="PF16492">
    <property type="entry name" value="Cadherin_C_2"/>
    <property type="match status" value="1"/>
</dbReference>
<dbReference type="Pfam" id="PF15974">
    <property type="entry name" value="Cadherin_tail"/>
    <property type="match status" value="1"/>
</dbReference>
<dbReference type="PRINTS" id="PR00205">
    <property type="entry name" value="CADHERIN"/>
</dbReference>
<dbReference type="SMART" id="SM00112">
    <property type="entry name" value="CA"/>
    <property type="match status" value="6"/>
</dbReference>
<dbReference type="SUPFAM" id="SSF49313">
    <property type="entry name" value="Cadherin-like"/>
    <property type="match status" value="6"/>
</dbReference>
<dbReference type="PROSITE" id="PS00232">
    <property type="entry name" value="CADHERIN_1"/>
    <property type="match status" value="4"/>
</dbReference>
<dbReference type="PROSITE" id="PS50268">
    <property type="entry name" value="CADHERIN_2"/>
    <property type="match status" value="6"/>
</dbReference>
<protein>
    <recommendedName>
        <fullName>Protocadherin gamma-B2</fullName>
        <shortName>PCDH-gamma-B2</shortName>
    </recommendedName>
</protein>
<comment type="function">
    <text>Potential calcium-dependent cell-adhesion protein. May be involved in the establishment and maintenance of specific neuronal connections in the brain.</text>
</comment>
<comment type="subcellular location">
    <subcellularLocation>
        <location evidence="1">Cell membrane</location>
        <topology evidence="1">Single-pass type I membrane protein</topology>
    </subcellularLocation>
</comment>
<reference key="1">
    <citation type="journal article" date="2005" name="Nature">
        <title>Initial sequence of the chimpanzee genome and comparison with the human genome.</title>
        <authorList>
            <consortium name="Chimpanzee sequencing and analysis consortium"/>
        </authorList>
    </citation>
    <scope>NUCLEOTIDE SEQUENCE [LARGE SCALE GENOMIC DNA]</scope>
</reference>
<reference key="2">
    <citation type="journal article" date="2005" name="Genetics">
        <title>Comparative genomics and diversifying selection of the clustered vertebrate protocadherin genes.</title>
        <authorList>
            <person name="Wu Q."/>
        </authorList>
    </citation>
    <scope>IDENTIFICATION</scope>
</reference>
<name>PCDGE_PANTR</name>
<organism>
    <name type="scientific">Pan troglodytes</name>
    <name type="common">Chimpanzee</name>
    <dbReference type="NCBI Taxonomy" id="9598"/>
    <lineage>
        <taxon>Eukaryota</taxon>
        <taxon>Metazoa</taxon>
        <taxon>Chordata</taxon>
        <taxon>Craniata</taxon>
        <taxon>Vertebrata</taxon>
        <taxon>Euteleostomi</taxon>
        <taxon>Mammalia</taxon>
        <taxon>Eutheria</taxon>
        <taxon>Euarchontoglires</taxon>
        <taxon>Primates</taxon>
        <taxon>Haplorrhini</taxon>
        <taxon>Catarrhini</taxon>
        <taxon>Hominidae</taxon>
        <taxon>Pan</taxon>
    </lineage>
</organism>